<dbReference type="EC" id="6.3.2.29"/>
<dbReference type="EC" id="6.3.2.30"/>
<dbReference type="EMBL" id="AJ005201">
    <property type="protein sequence ID" value="CAA06440.1"/>
    <property type="molecule type" value="Genomic_DNA"/>
</dbReference>
<dbReference type="EMBL" id="CP000117">
    <property type="protein sequence ID" value="ABA21436.1"/>
    <property type="molecule type" value="Genomic_DNA"/>
</dbReference>
<dbReference type="SMR" id="O86109"/>
<dbReference type="STRING" id="240292.Ava_1814"/>
<dbReference type="KEGG" id="ava:Ava_1814"/>
<dbReference type="eggNOG" id="COG0189">
    <property type="taxonomic scope" value="Bacteria"/>
</dbReference>
<dbReference type="eggNOG" id="COG0769">
    <property type="taxonomic scope" value="Bacteria"/>
</dbReference>
<dbReference type="HOGENOM" id="CLU_016806_0_0_3"/>
<dbReference type="BRENDA" id="6.3.2.29">
    <property type="organism ID" value="322"/>
</dbReference>
<dbReference type="BRENDA" id="6.3.2.30">
    <property type="organism ID" value="322"/>
</dbReference>
<dbReference type="Proteomes" id="UP000002533">
    <property type="component" value="Chromosome"/>
</dbReference>
<dbReference type="GO" id="GO:0005524">
    <property type="term" value="F:ATP binding"/>
    <property type="evidence" value="ECO:0007669"/>
    <property type="project" value="UniProtKB-KW"/>
</dbReference>
<dbReference type="GO" id="GO:0071161">
    <property type="term" value="F:cyanophycin synthetase activity (L-arginine-adding)"/>
    <property type="evidence" value="ECO:0007669"/>
    <property type="project" value="UniProtKB-EC"/>
</dbReference>
<dbReference type="GO" id="GO:0071160">
    <property type="term" value="F:cyanophycin synthetase activity (L-aspartate-adding)"/>
    <property type="evidence" value="ECO:0007669"/>
    <property type="project" value="UniProtKB-EC"/>
</dbReference>
<dbReference type="GO" id="GO:0046872">
    <property type="term" value="F:metal ion binding"/>
    <property type="evidence" value="ECO:0007669"/>
    <property type="project" value="InterPro"/>
</dbReference>
<dbReference type="GO" id="GO:0009058">
    <property type="term" value="P:biosynthetic process"/>
    <property type="evidence" value="ECO:0007669"/>
    <property type="project" value="InterPro"/>
</dbReference>
<dbReference type="Gene3D" id="3.30.470.20">
    <property type="entry name" value="ATP-grasp fold, B domain"/>
    <property type="match status" value="2"/>
</dbReference>
<dbReference type="Gene3D" id="3.90.190.20">
    <property type="entry name" value="Mur ligase, C-terminal domain"/>
    <property type="match status" value="1"/>
</dbReference>
<dbReference type="Gene3D" id="3.40.1190.10">
    <property type="entry name" value="Mur-like, catalytic domain"/>
    <property type="match status" value="1"/>
</dbReference>
<dbReference type="InterPro" id="IPR011761">
    <property type="entry name" value="ATP-grasp"/>
</dbReference>
<dbReference type="InterPro" id="IPR013651">
    <property type="entry name" value="ATP-grasp_RimK-type"/>
</dbReference>
<dbReference type="InterPro" id="IPR011810">
    <property type="entry name" value="Cya_phycin_syn"/>
</dbReference>
<dbReference type="InterPro" id="IPR044019">
    <property type="entry name" value="Cyanophycin_syn_N"/>
</dbReference>
<dbReference type="InterPro" id="IPR036565">
    <property type="entry name" value="Mur-like_cat_sf"/>
</dbReference>
<dbReference type="InterPro" id="IPR004101">
    <property type="entry name" value="Mur_ligase_C"/>
</dbReference>
<dbReference type="InterPro" id="IPR036615">
    <property type="entry name" value="Mur_ligase_C_dom_sf"/>
</dbReference>
<dbReference type="InterPro" id="IPR013221">
    <property type="entry name" value="Mur_ligase_cen"/>
</dbReference>
<dbReference type="NCBIfam" id="TIGR02068">
    <property type="entry name" value="cya_phycin_syn"/>
    <property type="match status" value="1"/>
</dbReference>
<dbReference type="NCBIfam" id="NF010623">
    <property type="entry name" value="PRK14016.1"/>
    <property type="match status" value="1"/>
</dbReference>
<dbReference type="PANTHER" id="PTHR23135:SF18">
    <property type="entry name" value="CYANOPHYCIN SYNTHETASE"/>
    <property type="match status" value="1"/>
</dbReference>
<dbReference type="PANTHER" id="PTHR23135">
    <property type="entry name" value="MUR LIGASE FAMILY MEMBER"/>
    <property type="match status" value="1"/>
</dbReference>
<dbReference type="Pfam" id="PF18921">
    <property type="entry name" value="Cyanophycin_syn"/>
    <property type="match status" value="1"/>
</dbReference>
<dbReference type="Pfam" id="PF02875">
    <property type="entry name" value="Mur_ligase_C"/>
    <property type="match status" value="1"/>
</dbReference>
<dbReference type="Pfam" id="PF08245">
    <property type="entry name" value="Mur_ligase_M"/>
    <property type="match status" value="1"/>
</dbReference>
<dbReference type="Pfam" id="PF08443">
    <property type="entry name" value="RimK"/>
    <property type="match status" value="1"/>
</dbReference>
<dbReference type="SUPFAM" id="SSF56059">
    <property type="entry name" value="Glutathione synthetase ATP-binding domain-like"/>
    <property type="match status" value="1"/>
</dbReference>
<dbReference type="SUPFAM" id="SSF53623">
    <property type="entry name" value="MurD-like peptide ligases, catalytic domain"/>
    <property type="match status" value="1"/>
</dbReference>
<dbReference type="SUPFAM" id="SSF53244">
    <property type="entry name" value="MurD-like peptide ligases, peptide-binding domain"/>
    <property type="match status" value="1"/>
</dbReference>
<dbReference type="PROSITE" id="PS50975">
    <property type="entry name" value="ATP_GRASP"/>
    <property type="match status" value="1"/>
</dbReference>
<sequence length="901" mass="98266">MRILKIQTLRGPNYWSIRRHKLIVMRLDLETLAETPSNEIPGFYEGLVEALPSLEGHYCSPGCHGGFLMRVREGTMMGHIVEHVALELQELAGMHVGFGRTRETATPGIYQVVIEYLNEEAGRYAGRAAVRLCQSIVDRGRYPKAELEQDIQDLKDLWRDASLGPSTEAIVKEAEKRGIPWMQLSARFLIQLGYGVNHKRMQATMTDKTGILGVELACDKEATKRILAASGVPVPRGTVINFLDDLEEAIEYVGGYPIVIKPLDGNHGRGITIDIRSWEEAEAAYEAARQVSRSIIVERYYVGRDHRVLVVDGKVVAVAERVPAHVIGNGRSTIAELIEEINQDPNRGDGHDKVLTKIELDRTSYQLLERAGYTLNSVPPKGTICYLRATANLSTGGTAVDRTDEIHPENIWLAQRVVKIIGLDIAGLDIVTTDISRPLRELDGVIVEVNAAPGFRMHVAPSQGIPRNVAGAVMDMLFPNEQSGRIPILSVTGTNGKTTTTRLLAHIYKQTGKVVGYTTTDGTYIGDYLVESGDNTGPQSAHVILQDPTVEVAVLETARGGILRSGLGFESANVGVVLNVAADHLGIGDIDTIDQLANLKSVVAESVYPDGYAVLNADDRRVAAMAEKTKANIAYFTMNPDSELVRKHIQKGGVAAVYENGYLSIVKGDWTHRIERAEQIPLTMGGRAPFMIANALAASLAAFVQNVSIEQIRAGLRTFRASVSQTPGRMNLFNLGNYHALVDYAHNPASYEAVGAFVRNWTSGQRIGVVGGPGDRRDEDFVTLGKLAAEIFDYIIVKEDDDTRGRPRGSASALITKGITQVKPDARYESILDETQAINKGLDMAPANGLVVILPESVSRAIKLIKLRGLVKEEIQQQNPSTTVIDNQNGVASSSVINTLL</sequence>
<accession>O86109</accession>
<accession>Q3MC50</accession>
<evidence type="ECO:0000255" key="1">
    <source>
        <dbReference type="PROSITE-ProRule" id="PRU00409"/>
    </source>
</evidence>
<evidence type="ECO:0000269" key="2">
    <source>
    </source>
</evidence>
<evidence type="ECO:0000305" key="3"/>
<feature type="chain" id="PRO_0000101712" description="Cyanophycin synthetase">
    <location>
        <begin position="1"/>
        <end position="901"/>
    </location>
</feature>
<feature type="domain" description="ATP-grasp" evidence="1">
    <location>
        <begin position="224"/>
        <end position="478"/>
    </location>
</feature>
<feature type="binding site" evidence="1">
    <location>
        <begin position="493"/>
        <end position="499"/>
    </location>
    <ligand>
        <name>ATP</name>
        <dbReference type="ChEBI" id="CHEBI:30616"/>
    </ligand>
</feature>
<reference key="1">
    <citation type="journal article" date="1998" name="Eur. J. Biochem.">
        <title>Molecular characterization of cyanophycin synthetase, the enzyme catalyzing the biosynthesis of the cyanobacterial reserve material multi-L-arginyl-poly-L-aspartate (cyanophycin).</title>
        <authorList>
            <person name="Ziegler K."/>
            <person name="Diener A."/>
            <person name="Herpin C."/>
            <person name="Richter R."/>
            <person name="Deutzmann R."/>
            <person name="Lockau W."/>
        </authorList>
    </citation>
    <scope>NUCLEOTIDE SEQUENCE [GENOMIC DNA]</scope>
    <scope>PROTEIN SEQUENCE OF 1-9; 157-169; 317-327; 602-616; 633-644 AND 829-840</scope>
    <scope>SUBUNIT</scope>
</reference>
<reference key="2">
    <citation type="journal article" date="2014" name="Stand. Genomic Sci.">
        <title>Complete genome sequence of Anabaena variabilis ATCC 29413.</title>
        <authorList>
            <person name="Thiel T."/>
            <person name="Pratte B.S."/>
            <person name="Zhong J."/>
            <person name="Goodwin L."/>
            <person name="Copeland A."/>
            <person name="Lucas S."/>
            <person name="Han C."/>
            <person name="Pitluck S."/>
            <person name="Land M.L."/>
            <person name="Kyrpides N.C."/>
            <person name="Woyke T."/>
        </authorList>
    </citation>
    <scope>NUCLEOTIDE SEQUENCE [LARGE SCALE GENOMIC DNA]</scope>
    <source>
        <strain>ATCC 29413 / PCC 7937</strain>
    </source>
</reference>
<proteinExistence type="evidence at protein level"/>
<keyword id="KW-0067">ATP-binding</keyword>
<keyword id="KW-0903">Direct protein sequencing</keyword>
<keyword id="KW-0436">Ligase</keyword>
<keyword id="KW-0547">Nucleotide-binding</keyword>
<name>CPHA_TRIV2</name>
<organism>
    <name type="scientific">Trichormus variabilis (strain ATCC 29413 / PCC 7937)</name>
    <name type="common">Anabaena variabilis</name>
    <dbReference type="NCBI Taxonomy" id="240292"/>
    <lineage>
        <taxon>Bacteria</taxon>
        <taxon>Bacillati</taxon>
        <taxon>Cyanobacteriota</taxon>
        <taxon>Cyanophyceae</taxon>
        <taxon>Nostocales</taxon>
        <taxon>Nostocaceae</taxon>
        <taxon>Trichormus</taxon>
    </lineage>
</organism>
<gene>
    <name type="primary">cphA</name>
    <name type="ordered locus">Ava_1814</name>
</gene>
<protein>
    <recommendedName>
        <fullName>Cyanophycin synthetase</fullName>
        <ecNumber>6.3.2.29</ecNumber>
        <ecNumber>6.3.2.30</ecNumber>
    </recommendedName>
    <alternativeName>
        <fullName>Cyanophycin synthase</fullName>
    </alternativeName>
</protein>
<comment type="function">
    <text>Catalyzes the ATP-dependent polymerization of arginine and aspartate to multi-L-arginyl-poly-L-aspartic acid (cyanophycin; a water-insoluble reserve polymer).</text>
</comment>
<comment type="catalytic activity">
    <reaction>
        <text>[L-4-(L-arginin-2-N-yl)aspartate](n) + L-aspartate + ATP = [L-4-(L-arginin-2-N-yl)aspartate](n)-L-aspartate + ADP + phosphate + H(+)</text>
        <dbReference type="Rhea" id="RHEA:13277"/>
        <dbReference type="Rhea" id="RHEA-COMP:13728"/>
        <dbReference type="Rhea" id="RHEA-COMP:13733"/>
        <dbReference type="ChEBI" id="CHEBI:15378"/>
        <dbReference type="ChEBI" id="CHEBI:29991"/>
        <dbReference type="ChEBI" id="CHEBI:30616"/>
        <dbReference type="ChEBI" id="CHEBI:43474"/>
        <dbReference type="ChEBI" id="CHEBI:137986"/>
        <dbReference type="ChEBI" id="CHEBI:137990"/>
        <dbReference type="ChEBI" id="CHEBI:456216"/>
        <dbReference type="EC" id="6.3.2.29"/>
    </reaction>
</comment>
<comment type="catalytic activity">
    <reaction>
        <text>[L-4-(L-arginin-2-N-yl)aspartate](n)-L-aspartate + L-arginine + ATP = [L-4-(L-arginin-2-N-yl)aspartate](n+1) + ADP + phosphate + H(+)</text>
        <dbReference type="Rhea" id="RHEA:23888"/>
        <dbReference type="Rhea" id="RHEA-COMP:13732"/>
        <dbReference type="Rhea" id="RHEA-COMP:13733"/>
        <dbReference type="ChEBI" id="CHEBI:15378"/>
        <dbReference type="ChEBI" id="CHEBI:30616"/>
        <dbReference type="ChEBI" id="CHEBI:32682"/>
        <dbReference type="ChEBI" id="CHEBI:43474"/>
        <dbReference type="ChEBI" id="CHEBI:137986"/>
        <dbReference type="ChEBI" id="CHEBI:137990"/>
        <dbReference type="ChEBI" id="CHEBI:456216"/>
        <dbReference type="EC" id="6.3.2.30"/>
    </reaction>
</comment>
<comment type="subunit">
    <text evidence="2">Homodimer.</text>
</comment>
<comment type="similarity">
    <text evidence="3">In the C-terminal section; belongs to the MurCDEF family.</text>
</comment>